<comment type="function">
    <text evidence="1">One of the primary rRNA binding proteins, it binds specifically to the 5'-end of 16S ribosomal RNA.</text>
</comment>
<comment type="subunit">
    <text evidence="1">Part of the 30S ribosomal subunit.</text>
</comment>
<comment type="similarity">
    <text evidence="1">Belongs to the universal ribosomal protein uS17 family.</text>
</comment>
<reference key="1">
    <citation type="submission" date="2007-08" db="EMBL/GenBank/DDBJ databases">
        <title>Complete sequence of Shewanella sediminis HAW-EB3.</title>
        <authorList>
            <consortium name="US DOE Joint Genome Institute"/>
            <person name="Copeland A."/>
            <person name="Lucas S."/>
            <person name="Lapidus A."/>
            <person name="Barry K."/>
            <person name="Glavina del Rio T."/>
            <person name="Dalin E."/>
            <person name="Tice H."/>
            <person name="Pitluck S."/>
            <person name="Chertkov O."/>
            <person name="Brettin T."/>
            <person name="Bruce D."/>
            <person name="Detter J.C."/>
            <person name="Han C."/>
            <person name="Schmutz J."/>
            <person name="Larimer F."/>
            <person name="Land M."/>
            <person name="Hauser L."/>
            <person name="Kyrpides N."/>
            <person name="Kim E."/>
            <person name="Zhao J.-S."/>
            <person name="Richardson P."/>
        </authorList>
    </citation>
    <scope>NUCLEOTIDE SEQUENCE [LARGE SCALE GENOMIC DNA]</scope>
    <source>
        <strain>HAW-EB3</strain>
    </source>
</reference>
<evidence type="ECO:0000255" key="1">
    <source>
        <dbReference type="HAMAP-Rule" id="MF_01345"/>
    </source>
</evidence>
<evidence type="ECO:0000305" key="2"/>
<feature type="chain" id="PRO_1000086859" description="Small ribosomal subunit protein uS17">
    <location>
        <begin position="1"/>
        <end position="82"/>
    </location>
</feature>
<sequence>MSDNIRTLQGRVLSNKMDKSITVAIERKVKHPLYGKYLKRTTKIHAHDEQNQCNAGDVVTIRECRPLSKTKSWTLVEVVSKA</sequence>
<name>RS17_SHESH</name>
<keyword id="KW-1185">Reference proteome</keyword>
<keyword id="KW-0687">Ribonucleoprotein</keyword>
<keyword id="KW-0689">Ribosomal protein</keyword>
<keyword id="KW-0694">RNA-binding</keyword>
<keyword id="KW-0699">rRNA-binding</keyword>
<gene>
    <name evidence="1" type="primary">rpsQ</name>
    <name type="ordered locus">Ssed_4308</name>
</gene>
<organism>
    <name type="scientific">Shewanella sediminis (strain HAW-EB3)</name>
    <dbReference type="NCBI Taxonomy" id="425104"/>
    <lineage>
        <taxon>Bacteria</taxon>
        <taxon>Pseudomonadati</taxon>
        <taxon>Pseudomonadota</taxon>
        <taxon>Gammaproteobacteria</taxon>
        <taxon>Alteromonadales</taxon>
        <taxon>Shewanellaceae</taxon>
        <taxon>Shewanella</taxon>
    </lineage>
</organism>
<proteinExistence type="inferred from homology"/>
<dbReference type="EMBL" id="CP000821">
    <property type="protein sequence ID" value="ABV38912.1"/>
    <property type="molecule type" value="Genomic_DNA"/>
</dbReference>
<dbReference type="RefSeq" id="WP_012144641.1">
    <property type="nucleotide sequence ID" value="NC_009831.1"/>
</dbReference>
<dbReference type="SMR" id="A8G1D9"/>
<dbReference type="STRING" id="425104.Ssed_4308"/>
<dbReference type="KEGG" id="sse:Ssed_4308"/>
<dbReference type="eggNOG" id="COG0186">
    <property type="taxonomic scope" value="Bacteria"/>
</dbReference>
<dbReference type="HOGENOM" id="CLU_073626_1_1_6"/>
<dbReference type="OrthoDB" id="9811714at2"/>
<dbReference type="Proteomes" id="UP000002015">
    <property type="component" value="Chromosome"/>
</dbReference>
<dbReference type="GO" id="GO:0022627">
    <property type="term" value="C:cytosolic small ribosomal subunit"/>
    <property type="evidence" value="ECO:0007669"/>
    <property type="project" value="TreeGrafter"/>
</dbReference>
<dbReference type="GO" id="GO:0019843">
    <property type="term" value="F:rRNA binding"/>
    <property type="evidence" value="ECO:0007669"/>
    <property type="project" value="UniProtKB-UniRule"/>
</dbReference>
<dbReference type="GO" id="GO:0003735">
    <property type="term" value="F:structural constituent of ribosome"/>
    <property type="evidence" value="ECO:0007669"/>
    <property type="project" value="InterPro"/>
</dbReference>
<dbReference type="GO" id="GO:0006412">
    <property type="term" value="P:translation"/>
    <property type="evidence" value="ECO:0007669"/>
    <property type="project" value="UniProtKB-UniRule"/>
</dbReference>
<dbReference type="CDD" id="cd00364">
    <property type="entry name" value="Ribosomal_uS17"/>
    <property type="match status" value="1"/>
</dbReference>
<dbReference type="FunFam" id="2.40.50.140:FF:000014">
    <property type="entry name" value="30S ribosomal protein S17"/>
    <property type="match status" value="1"/>
</dbReference>
<dbReference type="Gene3D" id="2.40.50.140">
    <property type="entry name" value="Nucleic acid-binding proteins"/>
    <property type="match status" value="1"/>
</dbReference>
<dbReference type="HAMAP" id="MF_01345_B">
    <property type="entry name" value="Ribosomal_uS17_B"/>
    <property type="match status" value="1"/>
</dbReference>
<dbReference type="InterPro" id="IPR012340">
    <property type="entry name" value="NA-bd_OB-fold"/>
</dbReference>
<dbReference type="InterPro" id="IPR000266">
    <property type="entry name" value="Ribosomal_uS17"/>
</dbReference>
<dbReference type="InterPro" id="IPR019984">
    <property type="entry name" value="Ribosomal_uS17_bact/chlr"/>
</dbReference>
<dbReference type="InterPro" id="IPR019979">
    <property type="entry name" value="Ribosomal_uS17_CS"/>
</dbReference>
<dbReference type="NCBIfam" id="NF004123">
    <property type="entry name" value="PRK05610.1"/>
    <property type="match status" value="1"/>
</dbReference>
<dbReference type="NCBIfam" id="TIGR03635">
    <property type="entry name" value="uS17_bact"/>
    <property type="match status" value="1"/>
</dbReference>
<dbReference type="PANTHER" id="PTHR10744">
    <property type="entry name" value="40S RIBOSOMAL PROTEIN S11 FAMILY MEMBER"/>
    <property type="match status" value="1"/>
</dbReference>
<dbReference type="PANTHER" id="PTHR10744:SF1">
    <property type="entry name" value="SMALL RIBOSOMAL SUBUNIT PROTEIN US17M"/>
    <property type="match status" value="1"/>
</dbReference>
<dbReference type="Pfam" id="PF00366">
    <property type="entry name" value="Ribosomal_S17"/>
    <property type="match status" value="1"/>
</dbReference>
<dbReference type="PRINTS" id="PR00973">
    <property type="entry name" value="RIBOSOMALS17"/>
</dbReference>
<dbReference type="SUPFAM" id="SSF50249">
    <property type="entry name" value="Nucleic acid-binding proteins"/>
    <property type="match status" value="1"/>
</dbReference>
<dbReference type="PROSITE" id="PS00056">
    <property type="entry name" value="RIBOSOMAL_S17"/>
    <property type="match status" value="1"/>
</dbReference>
<protein>
    <recommendedName>
        <fullName evidence="1">Small ribosomal subunit protein uS17</fullName>
    </recommendedName>
    <alternativeName>
        <fullName evidence="2">30S ribosomal protein S17</fullName>
    </alternativeName>
</protein>
<accession>A8G1D9</accession>